<evidence type="ECO:0000255" key="1">
    <source>
        <dbReference type="HAMAP-Rule" id="MF_00123"/>
    </source>
</evidence>
<dbReference type="EC" id="6.1.1.19" evidence="1"/>
<dbReference type="EMBL" id="BA000043">
    <property type="protein sequence ID" value="BAD77686.1"/>
    <property type="molecule type" value="Genomic_DNA"/>
</dbReference>
<dbReference type="RefSeq" id="WP_011232868.1">
    <property type="nucleotide sequence ID" value="NC_006510.1"/>
</dbReference>
<dbReference type="SMR" id="Q5KUF0"/>
<dbReference type="STRING" id="235909.GK3401"/>
<dbReference type="GeneID" id="32065285"/>
<dbReference type="KEGG" id="gka:GK3401"/>
<dbReference type="eggNOG" id="COG0018">
    <property type="taxonomic scope" value="Bacteria"/>
</dbReference>
<dbReference type="HOGENOM" id="CLU_006406_0_1_9"/>
<dbReference type="Proteomes" id="UP000001172">
    <property type="component" value="Chromosome"/>
</dbReference>
<dbReference type="GO" id="GO:0005737">
    <property type="term" value="C:cytoplasm"/>
    <property type="evidence" value="ECO:0007669"/>
    <property type="project" value="UniProtKB-SubCell"/>
</dbReference>
<dbReference type="GO" id="GO:0004814">
    <property type="term" value="F:arginine-tRNA ligase activity"/>
    <property type="evidence" value="ECO:0007669"/>
    <property type="project" value="UniProtKB-UniRule"/>
</dbReference>
<dbReference type="GO" id="GO:0005524">
    <property type="term" value="F:ATP binding"/>
    <property type="evidence" value="ECO:0007669"/>
    <property type="project" value="UniProtKB-UniRule"/>
</dbReference>
<dbReference type="GO" id="GO:0006420">
    <property type="term" value="P:arginyl-tRNA aminoacylation"/>
    <property type="evidence" value="ECO:0007669"/>
    <property type="project" value="UniProtKB-UniRule"/>
</dbReference>
<dbReference type="CDD" id="cd07956">
    <property type="entry name" value="Anticodon_Ia_Arg"/>
    <property type="match status" value="1"/>
</dbReference>
<dbReference type="CDD" id="cd00671">
    <property type="entry name" value="ArgRS_core"/>
    <property type="match status" value="1"/>
</dbReference>
<dbReference type="FunFam" id="1.10.730.10:FF:000008">
    <property type="entry name" value="Arginine--tRNA ligase"/>
    <property type="match status" value="1"/>
</dbReference>
<dbReference type="FunFam" id="3.30.1360.70:FF:000003">
    <property type="entry name" value="Arginine--tRNA ligase"/>
    <property type="match status" value="1"/>
</dbReference>
<dbReference type="FunFam" id="3.40.50.620:FF:000062">
    <property type="entry name" value="Arginine--tRNA ligase"/>
    <property type="match status" value="1"/>
</dbReference>
<dbReference type="Gene3D" id="3.30.1360.70">
    <property type="entry name" value="Arginyl tRNA synthetase N-terminal domain"/>
    <property type="match status" value="1"/>
</dbReference>
<dbReference type="Gene3D" id="3.40.50.620">
    <property type="entry name" value="HUPs"/>
    <property type="match status" value="1"/>
</dbReference>
<dbReference type="Gene3D" id="1.10.730.10">
    <property type="entry name" value="Isoleucyl-tRNA Synthetase, Domain 1"/>
    <property type="match status" value="1"/>
</dbReference>
<dbReference type="HAMAP" id="MF_00123">
    <property type="entry name" value="Arg_tRNA_synth"/>
    <property type="match status" value="1"/>
</dbReference>
<dbReference type="InterPro" id="IPR001412">
    <property type="entry name" value="aa-tRNA-synth_I_CS"/>
</dbReference>
<dbReference type="InterPro" id="IPR001278">
    <property type="entry name" value="Arg-tRNA-ligase"/>
</dbReference>
<dbReference type="InterPro" id="IPR005148">
    <property type="entry name" value="Arg-tRNA-synth_N"/>
</dbReference>
<dbReference type="InterPro" id="IPR036695">
    <property type="entry name" value="Arg-tRNA-synth_N_sf"/>
</dbReference>
<dbReference type="InterPro" id="IPR035684">
    <property type="entry name" value="ArgRS_core"/>
</dbReference>
<dbReference type="InterPro" id="IPR008909">
    <property type="entry name" value="DALR_anticod-bd"/>
</dbReference>
<dbReference type="InterPro" id="IPR014729">
    <property type="entry name" value="Rossmann-like_a/b/a_fold"/>
</dbReference>
<dbReference type="InterPro" id="IPR009080">
    <property type="entry name" value="tRNAsynth_Ia_anticodon-bd"/>
</dbReference>
<dbReference type="NCBIfam" id="TIGR00456">
    <property type="entry name" value="argS"/>
    <property type="match status" value="1"/>
</dbReference>
<dbReference type="PANTHER" id="PTHR11956:SF5">
    <property type="entry name" value="ARGININE--TRNA LIGASE, CYTOPLASMIC"/>
    <property type="match status" value="1"/>
</dbReference>
<dbReference type="PANTHER" id="PTHR11956">
    <property type="entry name" value="ARGINYL-TRNA SYNTHETASE"/>
    <property type="match status" value="1"/>
</dbReference>
<dbReference type="Pfam" id="PF03485">
    <property type="entry name" value="Arg_tRNA_synt_N"/>
    <property type="match status" value="1"/>
</dbReference>
<dbReference type="Pfam" id="PF05746">
    <property type="entry name" value="DALR_1"/>
    <property type="match status" value="1"/>
</dbReference>
<dbReference type="Pfam" id="PF00750">
    <property type="entry name" value="tRNA-synt_1d"/>
    <property type="match status" value="1"/>
</dbReference>
<dbReference type="PRINTS" id="PR01038">
    <property type="entry name" value="TRNASYNTHARG"/>
</dbReference>
<dbReference type="SMART" id="SM01016">
    <property type="entry name" value="Arg_tRNA_synt_N"/>
    <property type="match status" value="1"/>
</dbReference>
<dbReference type="SMART" id="SM00836">
    <property type="entry name" value="DALR_1"/>
    <property type="match status" value="1"/>
</dbReference>
<dbReference type="SUPFAM" id="SSF47323">
    <property type="entry name" value="Anticodon-binding domain of a subclass of class I aminoacyl-tRNA synthetases"/>
    <property type="match status" value="1"/>
</dbReference>
<dbReference type="SUPFAM" id="SSF55190">
    <property type="entry name" value="Arginyl-tRNA synthetase (ArgRS), N-terminal 'additional' domain"/>
    <property type="match status" value="1"/>
</dbReference>
<dbReference type="SUPFAM" id="SSF52374">
    <property type="entry name" value="Nucleotidylyl transferase"/>
    <property type="match status" value="1"/>
</dbReference>
<dbReference type="PROSITE" id="PS00178">
    <property type="entry name" value="AA_TRNA_LIGASE_I"/>
    <property type="match status" value="1"/>
</dbReference>
<feature type="chain" id="PRO_0000242025" description="Arginine--tRNA ligase">
    <location>
        <begin position="1"/>
        <end position="557"/>
    </location>
</feature>
<feature type="short sequence motif" description="'HIGH' region">
    <location>
        <begin position="132"/>
        <end position="142"/>
    </location>
</feature>
<keyword id="KW-0030">Aminoacyl-tRNA synthetase</keyword>
<keyword id="KW-0067">ATP-binding</keyword>
<keyword id="KW-0963">Cytoplasm</keyword>
<keyword id="KW-0436">Ligase</keyword>
<keyword id="KW-0547">Nucleotide-binding</keyword>
<keyword id="KW-0648">Protein biosynthesis</keyword>
<keyword id="KW-1185">Reference proteome</keyword>
<accession>Q5KUF0</accession>
<name>SYR_GEOKA</name>
<reference key="1">
    <citation type="journal article" date="2004" name="Nucleic Acids Res.">
        <title>Thermoadaptation trait revealed by the genome sequence of thermophilic Geobacillus kaustophilus.</title>
        <authorList>
            <person name="Takami H."/>
            <person name="Takaki Y."/>
            <person name="Chee G.-J."/>
            <person name="Nishi S."/>
            <person name="Shimamura S."/>
            <person name="Suzuki H."/>
            <person name="Matsui S."/>
            <person name="Uchiyama I."/>
        </authorList>
    </citation>
    <scope>NUCLEOTIDE SEQUENCE [LARGE SCALE GENOMIC DNA]</scope>
    <source>
        <strain>HTA426</strain>
    </source>
</reference>
<proteinExistence type="inferred from homology"/>
<gene>
    <name evidence="1" type="primary">argS</name>
    <name type="ordered locus">GK3401</name>
</gene>
<protein>
    <recommendedName>
        <fullName evidence="1">Arginine--tRNA ligase</fullName>
        <ecNumber evidence="1">6.1.1.19</ecNumber>
    </recommendedName>
    <alternativeName>
        <fullName evidence="1">Arginyl-tRNA synthetase</fullName>
        <shortName evidence="1">ArgRS</shortName>
    </alternativeName>
</protein>
<comment type="catalytic activity">
    <reaction evidence="1">
        <text>tRNA(Arg) + L-arginine + ATP = L-arginyl-tRNA(Arg) + AMP + diphosphate</text>
        <dbReference type="Rhea" id="RHEA:20301"/>
        <dbReference type="Rhea" id="RHEA-COMP:9658"/>
        <dbReference type="Rhea" id="RHEA-COMP:9673"/>
        <dbReference type="ChEBI" id="CHEBI:30616"/>
        <dbReference type="ChEBI" id="CHEBI:32682"/>
        <dbReference type="ChEBI" id="CHEBI:33019"/>
        <dbReference type="ChEBI" id="CHEBI:78442"/>
        <dbReference type="ChEBI" id="CHEBI:78513"/>
        <dbReference type="ChEBI" id="CHEBI:456215"/>
        <dbReference type="EC" id="6.1.1.19"/>
    </reaction>
</comment>
<comment type="subunit">
    <text evidence="1">Monomer.</text>
</comment>
<comment type="subcellular location">
    <subcellularLocation>
        <location evidence="1">Cytoplasm</location>
    </subcellularLocation>
</comment>
<comment type="similarity">
    <text evidence="1">Belongs to the class-I aminoacyl-tRNA synthetase family.</text>
</comment>
<organism>
    <name type="scientific">Geobacillus kaustophilus (strain HTA426)</name>
    <dbReference type="NCBI Taxonomy" id="235909"/>
    <lineage>
        <taxon>Bacteria</taxon>
        <taxon>Bacillati</taxon>
        <taxon>Bacillota</taxon>
        <taxon>Bacilli</taxon>
        <taxon>Bacillales</taxon>
        <taxon>Anoxybacillaceae</taxon>
        <taxon>Geobacillus</taxon>
        <taxon>Geobacillus thermoleovorans group</taxon>
    </lineage>
</organism>
<sequence length="557" mass="62698">MNIVGQIKEKMKEEIRQAAVRAGLASADELPDVLLEVPRDKAHGDYSTNIAMQLARIAKKPPRAIAEAIVGQLDRERMSVARIEIAGPGFINFYMDNRYLTAVVPAILQAGQAYGESNVGNGEKVQVEFVSANPTGDLHLGHARGAAVGDSLCNILAKAGFDVTREYYINDAGKQIYNLAKSVEARYFQALGVDMPLPEDGYYGDDIVEIGKKLAEEYGDRFVEMEEEERLAFFRDYGLRYELEKIKKDLADFRVPFDVWYSETSLYESGKIDEALSTLRERGYIYEQDGATWFRSTAFGDDKDRVLIKQDGTYTYLLPDIAYHQDKLRRGFKKLINIWGADHHGYIPRMKAAIAALGYDPEALEVEIIQMVNLYQNGERVKMSKRTGKAVTMRELMEEVGVDAVRYFFAMRSGDTHLDFDMDLAVSQSNENPVYYVQYAHARVSSILRQAEEQHISYDGDLALHHLVETEKEIELLKVLGDFPDVVAEAALKRMPHRVTAYAFDLASALHSFYNAEKVLDLDNIEKTKARLALVKAVQITLQNALALIGVSAPEQM</sequence>